<proteinExistence type="evidence at transcript level"/>
<organism>
    <name type="scientific">Mycobacterium tuberculosis (strain ATCC 25618 / H37Rv)</name>
    <dbReference type="NCBI Taxonomy" id="83332"/>
    <lineage>
        <taxon>Bacteria</taxon>
        <taxon>Bacillati</taxon>
        <taxon>Actinomycetota</taxon>
        <taxon>Actinomycetes</taxon>
        <taxon>Mycobacteriales</taxon>
        <taxon>Mycobacteriaceae</taxon>
        <taxon>Mycobacterium</taxon>
        <taxon>Mycobacterium tuberculosis complex</taxon>
    </lineage>
</organism>
<gene>
    <name type="primary">echA13</name>
    <name type="ordered locus">Rv1935c</name>
</gene>
<dbReference type="EMBL" id="AL123456">
    <property type="protein sequence ID" value="CCP44702.1"/>
    <property type="molecule type" value="Genomic_DNA"/>
</dbReference>
<dbReference type="RefSeq" id="NP_216451.1">
    <property type="nucleotide sequence ID" value="NC_000962.3"/>
</dbReference>
<dbReference type="RefSeq" id="WP_003409707.1">
    <property type="nucleotide sequence ID" value="NZ_NVQJ01000034.1"/>
</dbReference>
<dbReference type="SMR" id="P95279"/>
<dbReference type="FunCoup" id="P95279">
    <property type="interactions" value="75"/>
</dbReference>
<dbReference type="STRING" id="83332.Rv1935c"/>
<dbReference type="PaxDb" id="83332-Rv1935c"/>
<dbReference type="DNASU" id="885240"/>
<dbReference type="GeneID" id="885240"/>
<dbReference type="KEGG" id="mtu:Rv1935c"/>
<dbReference type="KEGG" id="mtv:RVBD_1935c"/>
<dbReference type="PATRIC" id="fig|83332.111.peg.2153"/>
<dbReference type="TubercuList" id="Rv1935c"/>
<dbReference type="eggNOG" id="COG1024">
    <property type="taxonomic scope" value="Bacteria"/>
</dbReference>
<dbReference type="HOGENOM" id="CLU_009834_7_3_11"/>
<dbReference type="InParanoid" id="P95279"/>
<dbReference type="OrthoDB" id="9807606at2"/>
<dbReference type="PhylomeDB" id="P95279"/>
<dbReference type="Proteomes" id="UP000001584">
    <property type="component" value="Chromosome"/>
</dbReference>
<dbReference type="GO" id="GO:0016829">
    <property type="term" value="F:lyase activity"/>
    <property type="evidence" value="ECO:0007669"/>
    <property type="project" value="UniProtKB-KW"/>
</dbReference>
<dbReference type="GO" id="GO:0006635">
    <property type="term" value="P:fatty acid beta-oxidation"/>
    <property type="evidence" value="ECO:0000318"/>
    <property type="project" value="GO_Central"/>
</dbReference>
<dbReference type="CDD" id="cd06558">
    <property type="entry name" value="crotonase-like"/>
    <property type="match status" value="1"/>
</dbReference>
<dbReference type="FunFam" id="3.90.226.10:FF:000083">
    <property type="entry name" value="Enoyl-CoA hydratase EchA13"/>
    <property type="match status" value="1"/>
</dbReference>
<dbReference type="Gene3D" id="3.90.226.10">
    <property type="entry name" value="2-enoyl-CoA Hydratase, Chain A, domain 1"/>
    <property type="match status" value="1"/>
</dbReference>
<dbReference type="InterPro" id="IPR029045">
    <property type="entry name" value="ClpP/crotonase-like_dom_sf"/>
</dbReference>
<dbReference type="InterPro" id="IPR001753">
    <property type="entry name" value="Enoyl-CoA_hydra/iso"/>
</dbReference>
<dbReference type="NCBIfam" id="NF006140">
    <property type="entry name" value="PRK08290.1"/>
    <property type="match status" value="1"/>
</dbReference>
<dbReference type="PANTHER" id="PTHR43802">
    <property type="entry name" value="ENOYL-COA HYDRATASE"/>
    <property type="match status" value="1"/>
</dbReference>
<dbReference type="PANTHER" id="PTHR43802:SF1">
    <property type="entry name" value="IP11341P-RELATED"/>
    <property type="match status" value="1"/>
</dbReference>
<dbReference type="Pfam" id="PF00378">
    <property type="entry name" value="ECH_1"/>
    <property type="match status" value="2"/>
</dbReference>
<dbReference type="SUPFAM" id="SSF52096">
    <property type="entry name" value="ClpP/crotonase"/>
    <property type="match status" value="1"/>
</dbReference>
<keyword id="KW-0276">Fatty acid metabolism</keyword>
<keyword id="KW-0443">Lipid metabolism</keyword>
<keyword id="KW-0456">Lyase</keyword>
<keyword id="KW-1185">Reference proteome</keyword>
<name>ECH13_MYCTU</name>
<sequence length="318" mass="35250">MFVGRVGPVDRRSDGERSRRPREFEYIRYETIDDGRIAAITLDRPKQRNAQTRGMLVELGAAFELAEADDTVRVVILRAAGPAFSAGHDLGSADDIRERSPGPDQHPSYRCNGATFGGVESRNRQEWHYYFENTKRWRNLRKITIAQVHGAVLSAGLMLAWCCDLIVASEDTVFADVVGTRLGMCGVEYFGHPWEFGPRKTKELLLTGDCIGADEAHALGMVSKVFPADELATSTIEFARRIAKVPTMAALLIKESVNQTVDAMGFSAALDGCFKIHQLNHAHWGEVTGGKLSYGTVEYGLEDWRAAPQIRPAIKQRP</sequence>
<feature type="chain" id="PRO_0000438539" description="Putative enoyl-CoA hydratase EchA13">
    <location>
        <begin position="1"/>
        <end position="318"/>
    </location>
</feature>
<feature type="region of interest" description="Disordered" evidence="1">
    <location>
        <begin position="90"/>
        <end position="110"/>
    </location>
</feature>
<accession>P95279</accession>
<accession>F2GGT0</accession>
<accession>I6Y7W5</accession>
<accession>Q7D7R5</accession>
<protein>
    <recommendedName>
        <fullName evidence="3">Putative enoyl-CoA hydratase EchA13</fullName>
    </recommendedName>
</protein>
<comment type="induction">
    <text evidence="2">Repressed by Mce3R.</text>
</comment>
<comment type="similarity">
    <text evidence="3">Belongs to the enoyl-CoA hydratase/isomerase family.</text>
</comment>
<evidence type="ECO:0000256" key="1">
    <source>
        <dbReference type="SAM" id="MobiDB-lite"/>
    </source>
</evidence>
<evidence type="ECO:0000269" key="2">
    <source>
    </source>
</evidence>
<evidence type="ECO:0000305" key="3"/>
<reference key="1">
    <citation type="journal article" date="1998" name="Nature">
        <title>Deciphering the biology of Mycobacterium tuberculosis from the complete genome sequence.</title>
        <authorList>
            <person name="Cole S.T."/>
            <person name="Brosch R."/>
            <person name="Parkhill J."/>
            <person name="Garnier T."/>
            <person name="Churcher C.M."/>
            <person name="Harris D.E."/>
            <person name="Gordon S.V."/>
            <person name="Eiglmeier K."/>
            <person name="Gas S."/>
            <person name="Barry C.E. III"/>
            <person name="Tekaia F."/>
            <person name="Badcock K."/>
            <person name="Basham D."/>
            <person name="Brown D."/>
            <person name="Chillingworth T."/>
            <person name="Connor R."/>
            <person name="Davies R.M."/>
            <person name="Devlin K."/>
            <person name="Feltwell T."/>
            <person name="Gentles S."/>
            <person name="Hamlin N."/>
            <person name="Holroyd S."/>
            <person name="Hornsby T."/>
            <person name="Jagels K."/>
            <person name="Krogh A."/>
            <person name="McLean J."/>
            <person name="Moule S."/>
            <person name="Murphy L.D."/>
            <person name="Oliver S."/>
            <person name="Osborne J."/>
            <person name="Quail M.A."/>
            <person name="Rajandream M.A."/>
            <person name="Rogers J."/>
            <person name="Rutter S."/>
            <person name="Seeger K."/>
            <person name="Skelton S."/>
            <person name="Squares S."/>
            <person name="Squares R."/>
            <person name="Sulston J.E."/>
            <person name="Taylor K."/>
            <person name="Whitehead S."/>
            <person name="Barrell B.G."/>
        </authorList>
    </citation>
    <scope>NUCLEOTIDE SEQUENCE [LARGE SCALE GENOMIC DNA]</scope>
    <source>
        <strain>ATCC 25618 / H37Rv</strain>
    </source>
</reference>
<reference key="2">
    <citation type="journal article" date="2009" name="Microbiology">
        <title>Mce3R, a TetR-type transcriptional repressor, controls the expression of a regulon involved in lipid metabolism in Mycobacterium tuberculosis.</title>
        <authorList>
            <person name="de la Paz Santangelo M."/>
            <person name="Klepp L."/>
            <person name="Nunez-Garcia J."/>
            <person name="Blanco F.C."/>
            <person name="Soria M."/>
            <person name="Garcia-Pelayo M.C."/>
            <person name="Bianco M.V."/>
            <person name="Cataldi A.A."/>
            <person name="Golby P."/>
            <person name="Jackson M."/>
            <person name="Gordon S.V."/>
            <person name="Bigi F."/>
        </authorList>
    </citation>
    <scope>INDUCTION</scope>
</reference>